<feature type="chain" id="PRO_0000363866" description="Probable metal-nicotianamine transporter YSL3">
    <location>
        <begin position="1"/>
        <end position="683"/>
    </location>
</feature>
<feature type="transmembrane region" description="Helical" evidence="2">
    <location>
        <begin position="29"/>
        <end position="49"/>
    </location>
</feature>
<feature type="transmembrane region" description="Helical" evidence="2">
    <location>
        <begin position="58"/>
        <end position="78"/>
    </location>
</feature>
<feature type="transmembrane region" description="Helical" evidence="2">
    <location>
        <begin position="97"/>
        <end position="117"/>
    </location>
</feature>
<feature type="transmembrane region" description="Helical" evidence="2">
    <location>
        <begin position="142"/>
        <end position="162"/>
    </location>
</feature>
<feature type="transmembrane region" description="Helical" evidence="2">
    <location>
        <begin position="204"/>
        <end position="224"/>
    </location>
</feature>
<feature type="transmembrane region" description="Helical" evidence="2">
    <location>
        <begin position="265"/>
        <end position="285"/>
    </location>
</feature>
<feature type="transmembrane region" description="Helical" evidence="2">
    <location>
        <begin position="309"/>
        <end position="329"/>
    </location>
</feature>
<feature type="transmembrane region" description="Helical" evidence="2">
    <location>
        <begin position="372"/>
        <end position="392"/>
    </location>
</feature>
<feature type="transmembrane region" description="Helical" evidence="2">
    <location>
        <begin position="404"/>
        <end position="424"/>
    </location>
</feature>
<feature type="transmembrane region" description="Helical" evidence="2">
    <location>
        <begin position="448"/>
        <end position="468"/>
    </location>
</feature>
<feature type="transmembrane region" description="Helical" evidence="2">
    <location>
        <begin position="490"/>
        <end position="510"/>
    </location>
</feature>
<feature type="transmembrane region" description="Helical" evidence="2">
    <location>
        <begin position="553"/>
        <end position="573"/>
    </location>
</feature>
<feature type="transmembrane region" description="Helical" evidence="2">
    <location>
        <begin position="595"/>
        <end position="615"/>
    </location>
</feature>
<feature type="transmembrane region" description="Helical" evidence="2">
    <location>
        <begin position="628"/>
        <end position="648"/>
    </location>
</feature>
<feature type="splice variant" id="VSP_036328" description="In isoform 2." evidence="3">
    <location>
        <begin position="308"/>
        <end position="350"/>
    </location>
</feature>
<feature type="sequence conflict" description="In Ref. 1; BAE91883." evidence="4" ref="1">
    <original>V</original>
    <variation>F</variation>
    <location>
        <position position="451"/>
    </location>
</feature>
<evidence type="ECO:0000250" key="1"/>
<evidence type="ECO:0000255" key="2"/>
<evidence type="ECO:0000303" key="3">
    <source>
    </source>
</evidence>
<evidence type="ECO:0000305" key="4"/>
<dbReference type="EMBL" id="AB190913">
    <property type="protein sequence ID" value="BAE91883.1"/>
    <property type="molecule type" value="mRNA"/>
</dbReference>
<dbReference type="EMBL" id="AC104274">
    <property type="protein sequence ID" value="AAT93878.1"/>
    <property type="status" value="ALT_SEQ"/>
    <property type="molecule type" value="Genomic_DNA"/>
</dbReference>
<dbReference type="EMBL" id="AP008211">
    <property type="protein sequence ID" value="BAF16945.1"/>
    <property type="status" value="ALT_SEQ"/>
    <property type="molecule type" value="Genomic_DNA"/>
</dbReference>
<dbReference type="EMBL" id="AP014961">
    <property type="protein sequence ID" value="BAS93030.1"/>
    <property type="molecule type" value="Genomic_DNA"/>
</dbReference>
<dbReference type="RefSeq" id="XP_015638994.1">
    <property type="nucleotide sequence ID" value="XM_015783508.1"/>
</dbReference>
<dbReference type="RefSeq" id="XP_015638995.1">
    <property type="nucleotide sequence ID" value="XM_015783509.1"/>
</dbReference>
<dbReference type="SMR" id="Q6AVD0"/>
<dbReference type="FunCoup" id="Q6AVD0">
    <property type="interactions" value="45"/>
</dbReference>
<dbReference type="STRING" id="39947.Q6AVD0"/>
<dbReference type="PaxDb" id="39947-Q6AVD0"/>
<dbReference type="KEGG" id="dosa:Os05g0251900"/>
<dbReference type="eggNOG" id="ENOG502QQ2H">
    <property type="taxonomic scope" value="Eukaryota"/>
</dbReference>
<dbReference type="InParanoid" id="Q6AVD0"/>
<dbReference type="OMA" id="AYITCAA"/>
<dbReference type="OrthoDB" id="627262at2759"/>
<dbReference type="Proteomes" id="UP000000763">
    <property type="component" value="Chromosome 5"/>
</dbReference>
<dbReference type="Proteomes" id="UP000059680">
    <property type="component" value="Chromosome 5"/>
</dbReference>
<dbReference type="GO" id="GO:0016020">
    <property type="term" value="C:membrane"/>
    <property type="evidence" value="ECO:0000318"/>
    <property type="project" value="GO_Central"/>
</dbReference>
<dbReference type="GO" id="GO:0035673">
    <property type="term" value="F:oligopeptide transmembrane transporter activity"/>
    <property type="evidence" value="ECO:0007669"/>
    <property type="project" value="InterPro"/>
</dbReference>
<dbReference type="InterPro" id="IPR004813">
    <property type="entry name" value="OPT"/>
</dbReference>
<dbReference type="InterPro" id="IPR045035">
    <property type="entry name" value="YSL-like"/>
</dbReference>
<dbReference type="NCBIfam" id="TIGR00728">
    <property type="entry name" value="OPT_sfam"/>
    <property type="match status" value="1"/>
</dbReference>
<dbReference type="PANTHER" id="PTHR31645:SF9">
    <property type="entry name" value="METAL-NICOTIANAMINE TRANSPORTER YSL4-RELATED"/>
    <property type="match status" value="1"/>
</dbReference>
<dbReference type="PANTHER" id="PTHR31645">
    <property type="entry name" value="OLIGOPEPTIDE TRANSPORTER YGL114W-RELATED"/>
    <property type="match status" value="1"/>
</dbReference>
<dbReference type="Pfam" id="PF03169">
    <property type="entry name" value="OPT"/>
    <property type="match status" value="1"/>
</dbReference>
<name>YSL3_ORYSJ</name>
<reference key="1">
    <citation type="journal article" date="2004" name="Plant J.">
        <title>OsYSL2 is a rice metal-nicotianamine transporter that is regulated by iron and expressed in the phloem.</title>
        <authorList>
            <person name="Koike S."/>
            <person name="Inoue H."/>
            <person name="Mizuno D."/>
            <person name="Takahashi M."/>
            <person name="Nakanishi H."/>
            <person name="Mori S."/>
            <person name="Nishizawa N.K."/>
        </authorList>
    </citation>
    <scope>NUCLEOTIDE SEQUENCE [MRNA] (ISOFORM 2)</scope>
    <scope>GENE FAMILY</scope>
    <scope>NOMENCLATURE</scope>
    <source>
        <strain>cv. Nipponbare</strain>
    </source>
</reference>
<reference key="2">
    <citation type="journal article" date="2005" name="Mol. Genet. Genomics">
        <title>A fine physical map of the rice chromosome 5.</title>
        <authorList>
            <person name="Cheng C.-H."/>
            <person name="Chung M.C."/>
            <person name="Liu S.-M."/>
            <person name="Chen S.-K."/>
            <person name="Kao F.Y."/>
            <person name="Lin S.-J."/>
            <person name="Hsiao S.-H."/>
            <person name="Tseng I.C."/>
            <person name="Hsing Y.-I.C."/>
            <person name="Wu H.-P."/>
            <person name="Chen C.-S."/>
            <person name="Shaw J.-F."/>
            <person name="Wu J."/>
            <person name="Matsumoto T."/>
            <person name="Sasaki T."/>
            <person name="Chen H.-C."/>
            <person name="Chow T.-Y."/>
        </authorList>
    </citation>
    <scope>NUCLEOTIDE SEQUENCE [LARGE SCALE GENOMIC DNA]</scope>
    <source>
        <strain>cv. Nipponbare</strain>
    </source>
</reference>
<reference key="3">
    <citation type="journal article" date="2005" name="Nature">
        <title>The map-based sequence of the rice genome.</title>
        <authorList>
            <consortium name="International rice genome sequencing project (IRGSP)"/>
        </authorList>
    </citation>
    <scope>NUCLEOTIDE SEQUENCE [LARGE SCALE GENOMIC DNA]</scope>
    <source>
        <strain>cv. Nipponbare</strain>
    </source>
</reference>
<reference key="4">
    <citation type="journal article" date="2008" name="Nucleic Acids Res.">
        <title>The rice annotation project database (RAP-DB): 2008 update.</title>
        <authorList>
            <consortium name="The rice annotation project (RAP)"/>
        </authorList>
    </citation>
    <scope>GENOME REANNOTATION</scope>
    <source>
        <strain>cv. Nipponbare</strain>
    </source>
</reference>
<reference key="5">
    <citation type="journal article" date="2013" name="Rice">
        <title>Improvement of the Oryza sativa Nipponbare reference genome using next generation sequence and optical map data.</title>
        <authorList>
            <person name="Kawahara Y."/>
            <person name="de la Bastide M."/>
            <person name="Hamilton J.P."/>
            <person name="Kanamori H."/>
            <person name="McCombie W.R."/>
            <person name="Ouyang S."/>
            <person name="Schwartz D.C."/>
            <person name="Tanaka T."/>
            <person name="Wu J."/>
            <person name="Zhou S."/>
            <person name="Childs K.L."/>
            <person name="Davidson R.M."/>
            <person name="Lin H."/>
            <person name="Quesada-Ocampo L."/>
            <person name="Vaillancourt B."/>
            <person name="Sakai H."/>
            <person name="Lee S.S."/>
            <person name="Kim J."/>
            <person name="Numa H."/>
            <person name="Itoh T."/>
            <person name="Buell C.R."/>
            <person name="Matsumoto T."/>
        </authorList>
    </citation>
    <scope>GENOME REANNOTATION</scope>
    <source>
        <strain>cv. Nipponbare</strain>
    </source>
</reference>
<sequence>MDAMIGDPMSATSVEAVFEKQPSPEFRELVTPRAMAVAVVLSVVICFVGMRIQMTAGIVPALNMPASILSFFLLKWLIRLLQSCGFPMLPFTRQENMFLLTCIITCLNLALTSGFATNIIGMTSTVARSLADDPDPRDIMDHVPIGKWIVYLFLVGMTGVLINVPFNQVMIIDYKLLFPTGTVIAQLINSFHTPEGAYVAKMQVATIFKVFFGSFSWSMFQWFYTAGDDCGFQHFPTFGLGLYKHRFYFDFSATYIGLGMICPHIVNFGLFFGAIISWGFLYPFLETKRGQWYQTDSPTSLNGQNGYKVFISVTLIITDGMINFLTLITTASINFYQLRKEHDLGLANYFKKHPSLNYDDRKRIEVFLANRIPIPVPVAAYITCAAISTIAIPAMFNQIKFYHLAVLYMVIPVVTFCNTYATGLTDWSVAPTYAKFTTFVFAAWIAKPGAVVASLLASGVIVAALHISSQAMQDLKSGHMTLTSPRAMVTGQIFGVAVGSILCPCVFLAFQSTTKPNAPVGSKQSDYPCPFAGLYRAIGVIGTGGVKELPKHCMTFCVVAFCVTVIIDAVVLVSQKRGWSIHRYIPSMTVIALPFFAGSYFTIDMCVGSLLLLAWTRMNAKSAEMLSSAVAAGLICGEGLFTLPSALLNMFKVQPPMCMKFLSGGEEVEAADSFLNNLGTSRT</sequence>
<protein>
    <recommendedName>
        <fullName>Probable metal-nicotianamine transporter YSL3</fullName>
    </recommendedName>
    <alternativeName>
        <fullName>Protein YELLOW STRIPE LIKE 3</fullName>
        <shortName>OsYSL3</shortName>
    </alternativeName>
</protein>
<proteinExistence type="evidence at transcript level"/>
<accession>Q6AVD0</accession>
<accession>Q25CI3</accession>
<gene>
    <name type="primary">YSL3</name>
    <name type="ordered locus">Os05g0251900</name>
    <name type="ordered locus">LOC_Os05g16280</name>
    <name type="ORF">OJ1171_H02.13</name>
</gene>
<keyword id="KW-0025">Alternative splicing</keyword>
<keyword id="KW-0472">Membrane</keyword>
<keyword id="KW-1185">Reference proteome</keyword>
<keyword id="KW-0812">Transmembrane</keyword>
<keyword id="KW-1133">Transmembrane helix</keyword>
<keyword id="KW-0813">Transport</keyword>
<organism>
    <name type="scientific">Oryza sativa subsp. japonica</name>
    <name type="common">Rice</name>
    <dbReference type="NCBI Taxonomy" id="39947"/>
    <lineage>
        <taxon>Eukaryota</taxon>
        <taxon>Viridiplantae</taxon>
        <taxon>Streptophyta</taxon>
        <taxon>Embryophyta</taxon>
        <taxon>Tracheophyta</taxon>
        <taxon>Spermatophyta</taxon>
        <taxon>Magnoliopsida</taxon>
        <taxon>Liliopsida</taxon>
        <taxon>Poales</taxon>
        <taxon>Poaceae</taxon>
        <taxon>BOP clade</taxon>
        <taxon>Oryzoideae</taxon>
        <taxon>Oryzeae</taxon>
        <taxon>Oryzinae</taxon>
        <taxon>Oryza</taxon>
        <taxon>Oryza sativa</taxon>
    </lineage>
</organism>
<comment type="function">
    <text evidence="1">May be involved in the transport of nicotianamine-chelated metals.</text>
</comment>
<comment type="subcellular location">
    <subcellularLocation>
        <location evidence="4">Membrane</location>
        <topology evidence="4">Multi-pass membrane protein</topology>
    </subcellularLocation>
</comment>
<comment type="alternative products">
    <event type="alternative splicing"/>
    <isoform>
        <id>Q6AVD0-1</id>
        <name>1</name>
        <sequence type="displayed"/>
    </isoform>
    <isoform>
        <id>Q6AVD0-2</id>
        <name>2</name>
        <sequence type="described" ref="VSP_036328"/>
    </isoform>
</comment>
<comment type="miscellaneous">
    <molecule>Isoform 2</molecule>
    <text evidence="4">May be due to a competing acceptor splice site.</text>
</comment>
<comment type="similarity">
    <text evidence="4">Belongs to the YSL (TC 2.A.67.2) family.</text>
</comment>
<comment type="sequence caution" evidence="4">
    <conflict type="erroneous gene model prediction">
        <sequence resource="EMBL-CDS" id="AAT93878"/>
    </conflict>
</comment>
<comment type="sequence caution" evidence="4">
    <conflict type="erroneous gene model prediction">
        <sequence resource="EMBL-CDS" id="BAF16945"/>
    </conflict>
</comment>